<gene>
    <name evidence="2" type="primary">Spc25</name>
    <name type="ORF">GL24369</name>
</gene>
<protein>
    <recommendedName>
        <fullName evidence="2">Kinetochore protein Spc25</fullName>
    </recommendedName>
</protein>
<proteinExistence type="inferred from homology"/>
<accession>B4G5J0</accession>
<comment type="function">
    <text evidence="1 2">Acts as a component of the essential kinetochore-associated Ndc80 complex, which is required for chromosome segregation and spindle checkpoint activity during meiosis and mitosis. Required for kinetochore integrity and the organization of stable microtubule binding sites in the outer plate of the kinetochore. Participates in SAC signaling that responds specifically to disruptions in spindle microtubule dynamics. The NDC80 complex synergistically enhances the affinity of the SKA1 complex for microtubules and may allow the NDC80 complex to track depolymerizing microtubules.</text>
</comment>
<comment type="subunit">
    <text evidence="2">Component of the Ndc80 complex, which is composed of Ndc80, Nuf2 and Spc25.</text>
</comment>
<comment type="subcellular location">
    <subcellularLocation>
        <location evidence="2">Nucleus</location>
    </subcellularLocation>
    <subcellularLocation>
        <location evidence="2">Chromosome</location>
        <location evidence="2">Centromere</location>
        <location evidence="2">Kinetochore</location>
    </subcellularLocation>
</comment>
<comment type="similarity">
    <text evidence="3">Belongs to the SPC25 family.</text>
</comment>
<feature type="chain" id="PRO_0000392423" description="Kinetochore protein Spc25">
    <location>
        <begin position="1"/>
        <end position="236"/>
    </location>
</feature>
<feature type="region of interest" description="Disordered" evidence="4">
    <location>
        <begin position="194"/>
        <end position="217"/>
    </location>
</feature>
<feature type="coiled-coil region" evidence="3">
    <location>
        <begin position="44"/>
        <end position="106"/>
    </location>
</feature>
<reference evidence="5" key="1">
    <citation type="journal article" date="2007" name="Nature">
        <title>Evolution of genes and genomes on the Drosophila phylogeny.</title>
        <authorList>
            <consortium name="Drosophila 12 genomes consortium"/>
        </authorList>
    </citation>
    <scope>NUCLEOTIDE SEQUENCE [LARGE SCALE GENOMIC DNA]</scope>
    <source>
        <strain>MSH-3 / Tucson 14011-0111.49</strain>
    </source>
</reference>
<dbReference type="EMBL" id="CH479179">
    <property type="protein sequence ID" value="EDW24856.1"/>
    <property type="molecule type" value="Genomic_DNA"/>
</dbReference>
<dbReference type="RefSeq" id="XP_002013870.1">
    <property type="nucleotide sequence ID" value="XM_002013834.1"/>
</dbReference>
<dbReference type="SMR" id="B4G5J0"/>
<dbReference type="STRING" id="7234.B4G5J0"/>
<dbReference type="EnsemblMetazoa" id="FBtr0189984">
    <property type="protein sequence ID" value="FBpp0188476"/>
    <property type="gene ID" value="FBgn0161959"/>
</dbReference>
<dbReference type="EnsemblMetazoa" id="XM_002013834.2">
    <property type="protein sequence ID" value="XP_002013870.2"/>
    <property type="gene ID" value="LOC6587440"/>
</dbReference>
<dbReference type="GeneID" id="6587440"/>
<dbReference type="KEGG" id="dpe:6587440"/>
<dbReference type="eggNOG" id="ENOG502RVT8">
    <property type="taxonomic scope" value="Eukaryota"/>
</dbReference>
<dbReference type="HOGENOM" id="CLU_1246541_0_0_1"/>
<dbReference type="OMA" id="NELMECM"/>
<dbReference type="OrthoDB" id="8006210at2759"/>
<dbReference type="PhylomeDB" id="B4G5J0"/>
<dbReference type="Proteomes" id="UP000008744">
    <property type="component" value="Unassembled WGS sequence"/>
</dbReference>
<dbReference type="GO" id="GO:0031262">
    <property type="term" value="C:Ndc80 complex"/>
    <property type="evidence" value="ECO:0000250"/>
    <property type="project" value="UniProtKB"/>
</dbReference>
<dbReference type="GO" id="GO:0005634">
    <property type="term" value="C:nucleus"/>
    <property type="evidence" value="ECO:0007669"/>
    <property type="project" value="UniProtKB-SubCell"/>
</dbReference>
<dbReference type="GO" id="GO:0051301">
    <property type="term" value="P:cell division"/>
    <property type="evidence" value="ECO:0007669"/>
    <property type="project" value="UniProtKB-KW"/>
</dbReference>
<dbReference type="GO" id="GO:0051311">
    <property type="term" value="P:meiotic metaphase chromosome alignment"/>
    <property type="evidence" value="ECO:0000250"/>
    <property type="project" value="UniProtKB"/>
</dbReference>
<dbReference type="GO" id="GO:0000212">
    <property type="term" value="P:meiotic spindle organization"/>
    <property type="evidence" value="ECO:0000250"/>
    <property type="project" value="UniProtKB"/>
</dbReference>
<dbReference type="GO" id="GO:0007080">
    <property type="term" value="P:mitotic metaphase chromosome alignment"/>
    <property type="evidence" value="ECO:0000250"/>
    <property type="project" value="UniProtKB"/>
</dbReference>
<organism>
    <name type="scientific">Drosophila persimilis</name>
    <name type="common">Fruit fly</name>
    <dbReference type="NCBI Taxonomy" id="7234"/>
    <lineage>
        <taxon>Eukaryota</taxon>
        <taxon>Metazoa</taxon>
        <taxon>Ecdysozoa</taxon>
        <taxon>Arthropoda</taxon>
        <taxon>Hexapoda</taxon>
        <taxon>Insecta</taxon>
        <taxon>Pterygota</taxon>
        <taxon>Neoptera</taxon>
        <taxon>Endopterygota</taxon>
        <taxon>Diptera</taxon>
        <taxon>Brachycera</taxon>
        <taxon>Muscomorpha</taxon>
        <taxon>Ephydroidea</taxon>
        <taxon>Drosophilidae</taxon>
        <taxon>Drosophila</taxon>
        <taxon>Sophophora</taxon>
    </lineage>
</organism>
<evidence type="ECO:0000250" key="1">
    <source>
        <dbReference type="UniProtKB" id="Q9HBM1"/>
    </source>
</evidence>
<evidence type="ECO:0000250" key="2">
    <source>
        <dbReference type="UniProtKB" id="Q9V3V7"/>
    </source>
</evidence>
<evidence type="ECO:0000255" key="3"/>
<evidence type="ECO:0000256" key="4">
    <source>
        <dbReference type="SAM" id="MobiDB-lite"/>
    </source>
</evidence>
<evidence type="ECO:0000312" key="5">
    <source>
        <dbReference type="EMBL" id="EDW24856.1"/>
    </source>
</evidence>
<sequence>MADLKASEGDLSDYYMRLKKIFSNETRLQSREASISKRSSRVHKNIISAKEAIERQERDFGKLQKVLLNRNQELERRFTLGEALAQQLEVTRQRNADMEAQLLRHTTEGRQRSNELMECMHSLKQATGTYINHEALPARLNGVSVVRADDGDIKLIPFSLDGNDADGLHTLWRSLHTRTDNNASKWRKLISDQEVAGASPVTPSGSERPKATSKHSNFMPTSIIEIDLTSPTNDAS</sequence>
<keyword id="KW-0131">Cell cycle</keyword>
<keyword id="KW-0132">Cell division</keyword>
<keyword id="KW-0137">Centromere</keyword>
<keyword id="KW-0158">Chromosome</keyword>
<keyword id="KW-0175">Coiled coil</keyword>
<keyword id="KW-0995">Kinetochore</keyword>
<keyword id="KW-0469">Meiosis</keyword>
<keyword id="KW-0498">Mitosis</keyword>
<keyword id="KW-0539">Nucleus</keyword>
<keyword id="KW-1185">Reference proteome</keyword>
<name>SPC25_DROPE</name>